<dbReference type="EMBL" id="BC077500">
    <property type="protein sequence ID" value="AAH77500.1"/>
    <property type="molecule type" value="mRNA"/>
</dbReference>
<dbReference type="EMBL" id="BC099353">
    <property type="protein sequence ID" value="AAH99353.1"/>
    <property type="molecule type" value="mRNA"/>
</dbReference>
<dbReference type="RefSeq" id="NP_001086438.1">
    <property type="nucleotide sequence ID" value="NM_001092969.1"/>
</dbReference>
<dbReference type="SMR" id="Q4KL91"/>
<dbReference type="GlyCosmos" id="Q4KL91">
    <property type="glycosylation" value="1 site, No reported glycans"/>
</dbReference>
<dbReference type="GeneID" id="445866"/>
<dbReference type="KEGG" id="xla:445866"/>
<dbReference type="AGR" id="Xenbase:XB-GENE-994063"/>
<dbReference type="CTD" id="445866"/>
<dbReference type="Xenbase" id="XB-GENE-994063">
    <property type="gene designation" value="slc36a4.L"/>
</dbReference>
<dbReference type="OMA" id="WIRNISK"/>
<dbReference type="OrthoDB" id="1684102at2759"/>
<dbReference type="Proteomes" id="UP000186698">
    <property type="component" value="Chromosome 2L"/>
</dbReference>
<dbReference type="Bgee" id="445866">
    <property type="expression patterns" value="Expressed in liver and 19 other cell types or tissues"/>
</dbReference>
<dbReference type="GO" id="GO:0005765">
    <property type="term" value="C:lysosomal membrane"/>
    <property type="evidence" value="ECO:0007669"/>
    <property type="project" value="UniProtKB-SubCell"/>
</dbReference>
<dbReference type="GO" id="GO:0005774">
    <property type="term" value="C:vacuolar membrane"/>
    <property type="evidence" value="ECO:0000318"/>
    <property type="project" value="GO_Central"/>
</dbReference>
<dbReference type="GO" id="GO:0015180">
    <property type="term" value="F:L-alanine transmembrane transporter activity"/>
    <property type="evidence" value="ECO:0000318"/>
    <property type="project" value="GO_Central"/>
</dbReference>
<dbReference type="GO" id="GO:0015193">
    <property type="term" value="F:L-proline transmembrane transporter activity"/>
    <property type="evidence" value="ECO:0000318"/>
    <property type="project" value="GO_Central"/>
</dbReference>
<dbReference type="GO" id="GO:0015293">
    <property type="term" value="F:symporter activity"/>
    <property type="evidence" value="ECO:0007669"/>
    <property type="project" value="UniProtKB-KW"/>
</dbReference>
<dbReference type="GO" id="GO:0003333">
    <property type="term" value="P:amino acid transmembrane transport"/>
    <property type="evidence" value="ECO:0000318"/>
    <property type="project" value="GO_Central"/>
</dbReference>
<dbReference type="GO" id="GO:0015808">
    <property type="term" value="P:L-alanine transport"/>
    <property type="evidence" value="ECO:0000318"/>
    <property type="project" value="GO_Central"/>
</dbReference>
<dbReference type="InterPro" id="IPR013057">
    <property type="entry name" value="AA_transpt_TM"/>
</dbReference>
<dbReference type="PANTHER" id="PTHR22950">
    <property type="entry name" value="AMINO ACID TRANSPORTER"/>
    <property type="match status" value="1"/>
</dbReference>
<dbReference type="PANTHER" id="PTHR22950:SF190">
    <property type="entry name" value="NEUTRAL AMINO ACID UNIPORTER 4"/>
    <property type="match status" value="1"/>
</dbReference>
<dbReference type="Pfam" id="PF01490">
    <property type="entry name" value="Aa_trans"/>
    <property type="match status" value="1"/>
</dbReference>
<comment type="function">
    <text evidence="1">Uniporter that mediates the transport of neutral amino acids like L-tryptophan, proline and alanine. The transport activity is sodium ions-independent, electroneutral and therefore functions via facilitated diffusion.</text>
</comment>
<comment type="catalytic activity">
    <reaction evidence="1">
        <text>L-tryptophan(in) = L-tryptophan(out)</text>
        <dbReference type="Rhea" id="RHEA:70947"/>
        <dbReference type="ChEBI" id="CHEBI:57912"/>
    </reaction>
</comment>
<comment type="catalytic activity">
    <reaction evidence="1">
        <text>L-alanine(in) = L-alanine(out)</text>
        <dbReference type="Rhea" id="RHEA:70719"/>
        <dbReference type="ChEBI" id="CHEBI:57972"/>
    </reaction>
</comment>
<comment type="catalytic activity">
    <reaction evidence="1">
        <text>L-proline(in) = L-proline(out)</text>
        <dbReference type="Rhea" id="RHEA:73811"/>
        <dbReference type="ChEBI" id="CHEBI:60039"/>
    </reaction>
</comment>
<comment type="subcellular location">
    <subcellularLocation>
        <location evidence="2">Lysosome membrane</location>
        <topology evidence="3">Multi-pass membrane protein</topology>
    </subcellularLocation>
</comment>
<comment type="similarity">
    <text evidence="4">Belongs to the amino acid/polyamine transporter 2 family.</text>
</comment>
<sequence>MDATELGVSGEGEEIDMEVMRPLIESEDRFEGTYGEKKHLQRYLNSDNKKDEEVMKPLIENEDDSDGTCDEHQYLQRHPDLDNKDGLTFFQTLIHLLKGNIGTGLLGLPLAMKNAGVLLGPISLLFFGIISIHCMNILVRCSHFLCQRYKKANLGYSDTVGLALEVGPGVLQRHASFGRNLVDWFLVVTQLGFCSVYFVFLAENIKQVFEVFLETKLQQSEIGIWSLDLRIYMFSFLPLIIPLVFIRDLKNLSLLSFFANVSMAISLLIVYQYVIRNLSDPRTLPLGTSWKTYPLFFGTAIFAFEGIGVVLPLENRMRDKKDFSKALNIGMAIVTTLYISLATLGYFCFGDQIKGSITLNLPQDSWLYQLVKILYSFGIYVTYAIQYYVPAEIILPAVTSRVQKTRKLLCEFTMRFFLVCLTCAVAVLIPRLDLVISFVGAVSSSTLALILPPLVEIITYHKENLSPWVIMKDVGIAVIGFVGFIAGTYVTIEEMIYPISYVPPNVSHSDFGVLNNTVLEGH</sequence>
<feature type="chain" id="PRO_0000308320" description="Neutral amino acid uniporter 4">
    <location>
        <begin position="1"/>
        <end position="522"/>
    </location>
</feature>
<feature type="transmembrane region" description="Helical" evidence="3">
    <location>
        <begin position="115"/>
        <end position="135"/>
    </location>
</feature>
<feature type="transmembrane region" description="Helical" evidence="3">
    <location>
        <begin position="181"/>
        <end position="201"/>
    </location>
</feature>
<feature type="transmembrane region" description="Helical" evidence="3">
    <location>
        <begin position="226"/>
        <end position="246"/>
    </location>
</feature>
<feature type="transmembrane region" description="Helical" evidence="3">
    <location>
        <begin position="255"/>
        <end position="275"/>
    </location>
</feature>
<feature type="transmembrane region" description="Helical" evidence="3">
    <location>
        <begin position="293"/>
        <end position="313"/>
    </location>
</feature>
<feature type="transmembrane region" description="Helical" evidence="3">
    <location>
        <begin position="329"/>
        <end position="349"/>
    </location>
</feature>
<feature type="transmembrane region" description="Helical" evidence="3">
    <location>
        <begin position="377"/>
        <end position="397"/>
    </location>
</feature>
<feature type="transmembrane region" description="Helical" evidence="3">
    <location>
        <begin position="409"/>
        <end position="429"/>
    </location>
</feature>
<feature type="transmembrane region" description="Helical" evidence="3">
    <location>
        <begin position="435"/>
        <end position="455"/>
    </location>
</feature>
<feature type="transmembrane region" description="Helical" evidence="3">
    <location>
        <begin position="467"/>
        <end position="487"/>
    </location>
</feature>
<feature type="glycosylation site" description="N-linked (GlcNAc...) asparagine" evidence="3">
    <location>
        <position position="515"/>
    </location>
</feature>
<keyword id="KW-0029">Amino-acid transport</keyword>
<keyword id="KW-0325">Glycoprotein</keyword>
<keyword id="KW-0458">Lysosome</keyword>
<keyword id="KW-0472">Membrane</keyword>
<keyword id="KW-1185">Reference proteome</keyword>
<keyword id="KW-0769">Symport</keyword>
<keyword id="KW-0812">Transmembrane</keyword>
<keyword id="KW-1133">Transmembrane helix</keyword>
<keyword id="KW-0813">Transport</keyword>
<name>S36A4_XENLA</name>
<organism>
    <name type="scientific">Xenopus laevis</name>
    <name type="common">African clawed frog</name>
    <dbReference type="NCBI Taxonomy" id="8355"/>
    <lineage>
        <taxon>Eukaryota</taxon>
        <taxon>Metazoa</taxon>
        <taxon>Chordata</taxon>
        <taxon>Craniata</taxon>
        <taxon>Vertebrata</taxon>
        <taxon>Euteleostomi</taxon>
        <taxon>Amphibia</taxon>
        <taxon>Batrachia</taxon>
        <taxon>Anura</taxon>
        <taxon>Pipoidea</taxon>
        <taxon>Pipidae</taxon>
        <taxon>Xenopodinae</taxon>
        <taxon>Xenopus</taxon>
        <taxon>Xenopus</taxon>
    </lineage>
</organism>
<gene>
    <name evidence="1" type="primary">slc36a4</name>
    <name type="synonym">pat4</name>
</gene>
<protein>
    <recommendedName>
        <fullName evidence="1">Neutral amino acid uniporter 4</fullName>
    </recommendedName>
    <alternativeName>
        <fullName>Solute carrier family 36 member 4</fullName>
    </alternativeName>
</protein>
<evidence type="ECO:0000250" key="1">
    <source>
        <dbReference type="UniProtKB" id="Q6YBV0"/>
    </source>
</evidence>
<evidence type="ECO:0000250" key="2">
    <source>
        <dbReference type="UniProtKB" id="Q8CH36"/>
    </source>
</evidence>
<evidence type="ECO:0000255" key="3"/>
<evidence type="ECO:0000305" key="4"/>
<reference key="1">
    <citation type="submission" date="2005-07" db="EMBL/GenBank/DDBJ databases">
        <authorList>
            <consortium name="NIH - Xenopus Gene Collection (XGC) project"/>
        </authorList>
    </citation>
    <scope>NUCLEOTIDE SEQUENCE [LARGE SCALE MRNA]</scope>
    <source>
        <tissue>Ovary</tissue>
        <tissue>Tadpole</tissue>
    </source>
</reference>
<accession>Q4KL91</accession>
<accession>Q6DDP2</accession>
<proteinExistence type="evidence at transcript level"/>